<proteinExistence type="inferred from homology"/>
<dbReference type="EMBL" id="CP001205">
    <property type="protein sequence ID" value="ACK74653.1"/>
    <property type="molecule type" value="Genomic_DNA"/>
</dbReference>
<dbReference type="RefSeq" id="WP_002656801.1">
    <property type="nucleotide sequence ID" value="NC_011728.1"/>
</dbReference>
<dbReference type="BMRB" id="B7J0F1"/>
<dbReference type="SMR" id="B7J0F1"/>
<dbReference type="GeneID" id="56567513"/>
<dbReference type="KEGG" id="bbz:BbuZS7_0725"/>
<dbReference type="HOGENOM" id="CLU_108696_5_6_12"/>
<dbReference type="UniPathway" id="UPA00094"/>
<dbReference type="Proteomes" id="UP000006901">
    <property type="component" value="Chromosome"/>
</dbReference>
<dbReference type="GO" id="GO:0005829">
    <property type="term" value="C:cytosol"/>
    <property type="evidence" value="ECO:0007669"/>
    <property type="project" value="TreeGrafter"/>
</dbReference>
<dbReference type="GO" id="GO:0016020">
    <property type="term" value="C:membrane"/>
    <property type="evidence" value="ECO:0007669"/>
    <property type="project" value="GOC"/>
</dbReference>
<dbReference type="GO" id="GO:0000035">
    <property type="term" value="F:acyl binding"/>
    <property type="evidence" value="ECO:0007669"/>
    <property type="project" value="TreeGrafter"/>
</dbReference>
<dbReference type="GO" id="GO:0000036">
    <property type="term" value="F:acyl carrier activity"/>
    <property type="evidence" value="ECO:0007669"/>
    <property type="project" value="UniProtKB-UniRule"/>
</dbReference>
<dbReference type="GO" id="GO:0009245">
    <property type="term" value="P:lipid A biosynthetic process"/>
    <property type="evidence" value="ECO:0007669"/>
    <property type="project" value="TreeGrafter"/>
</dbReference>
<dbReference type="Gene3D" id="1.10.1200.10">
    <property type="entry name" value="ACP-like"/>
    <property type="match status" value="1"/>
</dbReference>
<dbReference type="HAMAP" id="MF_01217">
    <property type="entry name" value="Acyl_carrier"/>
    <property type="match status" value="1"/>
</dbReference>
<dbReference type="InterPro" id="IPR003231">
    <property type="entry name" value="ACP"/>
</dbReference>
<dbReference type="InterPro" id="IPR036736">
    <property type="entry name" value="ACP-like_sf"/>
</dbReference>
<dbReference type="InterPro" id="IPR009081">
    <property type="entry name" value="PP-bd_ACP"/>
</dbReference>
<dbReference type="NCBIfam" id="TIGR00517">
    <property type="entry name" value="acyl_carrier"/>
    <property type="match status" value="1"/>
</dbReference>
<dbReference type="NCBIfam" id="NF002148">
    <property type="entry name" value="PRK00982.1-2"/>
    <property type="match status" value="1"/>
</dbReference>
<dbReference type="NCBIfam" id="NF002150">
    <property type="entry name" value="PRK00982.1-4"/>
    <property type="match status" value="1"/>
</dbReference>
<dbReference type="PANTHER" id="PTHR20863">
    <property type="entry name" value="ACYL CARRIER PROTEIN"/>
    <property type="match status" value="1"/>
</dbReference>
<dbReference type="PANTHER" id="PTHR20863:SF76">
    <property type="entry name" value="CARRIER DOMAIN-CONTAINING PROTEIN"/>
    <property type="match status" value="1"/>
</dbReference>
<dbReference type="Pfam" id="PF00550">
    <property type="entry name" value="PP-binding"/>
    <property type="match status" value="1"/>
</dbReference>
<dbReference type="SUPFAM" id="SSF47336">
    <property type="entry name" value="ACP-like"/>
    <property type="match status" value="1"/>
</dbReference>
<dbReference type="PROSITE" id="PS50075">
    <property type="entry name" value="CARRIER"/>
    <property type="match status" value="1"/>
</dbReference>
<feature type="chain" id="PRO_1000139003" description="Acyl carrier protein">
    <location>
        <begin position="1"/>
        <end position="80"/>
    </location>
</feature>
<feature type="domain" description="Carrier" evidence="2">
    <location>
        <begin position="4"/>
        <end position="79"/>
    </location>
</feature>
<feature type="modified residue" description="O-(pantetheine 4'-phosphoryl)serine" evidence="2">
    <location>
        <position position="39"/>
    </location>
</feature>
<comment type="function">
    <text evidence="1">Carrier of the growing fatty acid chain in fatty acid biosynthesis.</text>
</comment>
<comment type="pathway">
    <text evidence="1">Lipid metabolism; fatty acid biosynthesis.</text>
</comment>
<comment type="subcellular location">
    <subcellularLocation>
        <location evidence="1">Cytoplasm</location>
    </subcellularLocation>
</comment>
<comment type="PTM">
    <text evidence="1">4'-phosphopantetheine is transferred from CoA to a specific serine of apo-ACP by AcpS. This modification is essential for activity because fatty acids are bound in thioester linkage to the sulfhydryl of the prosthetic group.</text>
</comment>
<comment type="similarity">
    <text evidence="1">Belongs to the acyl carrier protein (ACP) family.</text>
</comment>
<keyword id="KW-0963">Cytoplasm</keyword>
<keyword id="KW-0275">Fatty acid biosynthesis</keyword>
<keyword id="KW-0276">Fatty acid metabolism</keyword>
<keyword id="KW-0444">Lipid biosynthesis</keyword>
<keyword id="KW-0443">Lipid metabolism</keyword>
<keyword id="KW-0596">Phosphopantetheine</keyword>
<keyword id="KW-0597">Phosphoprotein</keyword>
<organism>
    <name type="scientific">Borreliella burgdorferi (strain ZS7)</name>
    <name type="common">Borrelia burgdorferi</name>
    <dbReference type="NCBI Taxonomy" id="445985"/>
    <lineage>
        <taxon>Bacteria</taxon>
        <taxon>Pseudomonadati</taxon>
        <taxon>Spirochaetota</taxon>
        <taxon>Spirochaetia</taxon>
        <taxon>Spirochaetales</taxon>
        <taxon>Borreliaceae</taxon>
        <taxon>Borreliella</taxon>
    </lineage>
</organism>
<evidence type="ECO:0000255" key="1">
    <source>
        <dbReference type="HAMAP-Rule" id="MF_01217"/>
    </source>
</evidence>
<evidence type="ECO:0000255" key="2">
    <source>
        <dbReference type="PROSITE-ProRule" id="PRU00258"/>
    </source>
</evidence>
<protein>
    <recommendedName>
        <fullName evidence="1">Acyl carrier protein</fullName>
        <shortName evidence="1">ACP</shortName>
    </recommendedName>
</protein>
<reference key="1">
    <citation type="journal article" date="2011" name="J. Bacteriol.">
        <title>Whole-genome sequences of thirteen isolates of Borrelia burgdorferi.</title>
        <authorList>
            <person name="Schutzer S.E."/>
            <person name="Fraser-Liggett C.M."/>
            <person name="Casjens S.R."/>
            <person name="Qiu W.G."/>
            <person name="Dunn J.J."/>
            <person name="Mongodin E.F."/>
            <person name="Luft B.J."/>
        </authorList>
    </citation>
    <scope>NUCLEOTIDE SEQUENCE [LARGE SCALE GENOMIC DNA]</scope>
    <source>
        <strain>ZS7</strain>
    </source>
</reference>
<sequence>MDNDEIFSKVRSIISEQLDKKEDEITTDSRFVEDLNADSLDIYELLYLLEEAFDDKIPENEANEFETVGDVVNFIKKRKG</sequence>
<name>ACP_BORBZ</name>
<gene>
    <name evidence="1" type="primary">acpP</name>
    <name type="ordered locus">BbuZS7_0725</name>
</gene>
<accession>B7J0F1</accession>